<sequence>MAKLTVKDVDLKGKKVLVRVDFNVPLKDGVITNDNRITAALPTIKYIIEQGGRAILFSHLGRVKEEADKAGKSLAPVAADLAAKLGQDVVFPGVTRGAELEAAINALEDGQVLLVENTRYEDVDGKKESKNDPELGKYWASLGDGIFVNDAFGTAHRAHASNVGISANVEKAVAGFLLENEIAYIQEAVETPERPFVAILGGSKVSDKIGVIENLLEKADKVLIGGGMTYTFYKAQGIEIGNSLVEEDKLDVAKALLEKANGKLILPVDSKEANAFAGYTEVRDTEGEAVSEGFLGLDIGPKSIAKFDEALTGAKTVVWNGPMGVFENPDFQAGTIGVMDAIVKQPGVKSIIGGGDSAAAAINLGRADKFSWISTGGGASMELLEGKVLPGLAALTEK</sequence>
<comment type="catalytic activity">
    <reaction evidence="1">
        <text>(2R)-3-phosphoglycerate + ATP = (2R)-3-phospho-glyceroyl phosphate + ADP</text>
        <dbReference type="Rhea" id="RHEA:14801"/>
        <dbReference type="ChEBI" id="CHEBI:30616"/>
        <dbReference type="ChEBI" id="CHEBI:57604"/>
        <dbReference type="ChEBI" id="CHEBI:58272"/>
        <dbReference type="ChEBI" id="CHEBI:456216"/>
        <dbReference type="EC" id="2.7.2.3"/>
    </reaction>
</comment>
<comment type="pathway">
    <text evidence="1">Carbohydrate degradation; glycolysis; pyruvate from D-glyceraldehyde 3-phosphate: step 2/5.</text>
</comment>
<comment type="subunit">
    <text evidence="1">Monomer.</text>
</comment>
<comment type="subcellular location">
    <subcellularLocation>
        <location evidence="1">Cytoplasm</location>
    </subcellularLocation>
</comment>
<comment type="similarity">
    <text evidence="1">Belongs to the phosphoglycerate kinase family.</text>
</comment>
<keyword id="KW-0067">ATP-binding</keyword>
<keyword id="KW-0963">Cytoplasm</keyword>
<keyword id="KW-0324">Glycolysis</keyword>
<keyword id="KW-0418">Kinase</keyword>
<keyword id="KW-0547">Nucleotide-binding</keyword>
<keyword id="KW-0808">Transferase</keyword>
<gene>
    <name evidence="1" type="primary">pgk</name>
    <name type="ordered locus">SPT_0536</name>
</gene>
<organism>
    <name type="scientific">Streptococcus pneumoniae (strain Taiwan19F-14)</name>
    <dbReference type="NCBI Taxonomy" id="487213"/>
    <lineage>
        <taxon>Bacteria</taxon>
        <taxon>Bacillati</taxon>
        <taxon>Bacillota</taxon>
        <taxon>Bacilli</taxon>
        <taxon>Lactobacillales</taxon>
        <taxon>Streptococcaceae</taxon>
        <taxon>Streptococcus</taxon>
    </lineage>
</organism>
<name>PGK_STRZT</name>
<proteinExistence type="inferred from homology"/>
<accession>C1CQ04</accession>
<evidence type="ECO:0000255" key="1">
    <source>
        <dbReference type="HAMAP-Rule" id="MF_00145"/>
    </source>
</evidence>
<feature type="chain" id="PRO_1000192855" description="Phosphoglycerate kinase">
    <location>
        <begin position="1"/>
        <end position="398"/>
    </location>
</feature>
<feature type="binding site" evidence="1">
    <location>
        <begin position="21"/>
        <end position="23"/>
    </location>
    <ligand>
        <name>substrate</name>
    </ligand>
</feature>
<feature type="binding site" evidence="1">
    <location>
        <position position="36"/>
    </location>
    <ligand>
        <name>substrate</name>
    </ligand>
</feature>
<feature type="binding site" evidence="1">
    <location>
        <begin position="59"/>
        <end position="62"/>
    </location>
    <ligand>
        <name>substrate</name>
    </ligand>
</feature>
<feature type="binding site" evidence="1">
    <location>
        <position position="119"/>
    </location>
    <ligand>
        <name>substrate</name>
    </ligand>
</feature>
<feature type="binding site" evidence="1">
    <location>
        <position position="157"/>
    </location>
    <ligand>
        <name>substrate</name>
    </ligand>
</feature>
<feature type="binding site" evidence="1">
    <location>
        <position position="208"/>
    </location>
    <ligand>
        <name>ATP</name>
        <dbReference type="ChEBI" id="CHEBI:30616"/>
    </ligand>
</feature>
<feature type="binding site" evidence="1">
    <location>
        <position position="296"/>
    </location>
    <ligand>
        <name>ATP</name>
        <dbReference type="ChEBI" id="CHEBI:30616"/>
    </ligand>
</feature>
<feature type="binding site" evidence="1">
    <location>
        <position position="327"/>
    </location>
    <ligand>
        <name>ATP</name>
        <dbReference type="ChEBI" id="CHEBI:30616"/>
    </ligand>
</feature>
<feature type="binding site" evidence="1">
    <location>
        <begin position="354"/>
        <end position="357"/>
    </location>
    <ligand>
        <name>ATP</name>
        <dbReference type="ChEBI" id="CHEBI:30616"/>
    </ligand>
</feature>
<dbReference type="EC" id="2.7.2.3" evidence="1"/>
<dbReference type="EMBL" id="CP000921">
    <property type="protein sequence ID" value="ACO23880.1"/>
    <property type="molecule type" value="Genomic_DNA"/>
</dbReference>
<dbReference type="RefSeq" id="WP_001096743.1">
    <property type="nucleotide sequence ID" value="NC_012469.1"/>
</dbReference>
<dbReference type="SMR" id="C1CQ04"/>
<dbReference type="KEGG" id="snt:SPT_0536"/>
<dbReference type="HOGENOM" id="CLU_025427_0_1_9"/>
<dbReference type="UniPathway" id="UPA00109">
    <property type="reaction ID" value="UER00185"/>
</dbReference>
<dbReference type="GO" id="GO:0005829">
    <property type="term" value="C:cytosol"/>
    <property type="evidence" value="ECO:0007669"/>
    <property type="project" value="TreeGrafter"/>
</dbReference>
<dbReference type="GO" id="GO:0043531">
    <property type="term" value="F:ADP binding"/>
    <property type="evidence" value="ECO:0007669"/>
    <property type="project" value="TreeGrafter"/>
</dbReference>
<dbReference type="GO" id="GO:0005524">
    <property type="term" value="F:ATP binding"/>
    <property type="evidence" value="ECO:0007669"/>
    <property type="project" value="UniProtKB-KW"/>
</dbReference>
<dbReference type="GO" id="GO:0004618">
    <property type="term" value="F:phosphoglycerate kinase activity"/>
    <property type="evidence" value="ECO:0007669"/>
    <property type="project" value="UniProtKB-UniRule"/>
</dbReference>
<dbReference type="GO" id="GO:0006094">
    <property type="term" value="P:gluconeogenesis"/>
    <property type="evidence" value="ECO:0007669"/>
    <property type="project" value="TreeGrafter"/>
</dbReference>
<dbReference type="GO" id="GO:0006096">
    <property type="term" value="P:glycolytic process"/>
    <property type="evidence" value="ECO:0007669"/>
    <property type="project" value="UniProtKB-UniRule"/>
</dbReference>
<dbReference type="FunFam" id="3.40.50.1260:FF:000001">
    <property type="entry name" value="Phosphoglycerate kinase"/>
    <property type="match status" value="1"/>
</dbReference>
<dbReference type="FunFam" id="3.40.50.1260:FF:000008">
    <property type="entry name" value="Phosphoglycerate kinase"/>
    <property type="match status" value="1"/>
</dbReference>
<dbReference type="Gene3D" id="3.40.50.1260">
    <property type="entry name" value="Phosphoglycerate kinase, N-terminal domain"/>
    <property type="match status" value="2"/>
</dbReference>
<dbReference type="HAMAP" id="MF_00145">
    <property type="entry name" value="Phosphoglyc_kinase"/>
    <property type="match status" value="1"/>
</dbReference>
<dbReference type="InterPro" id="IPR001576">
    <property type="entry name" value="Phosphoglycerate_kinase"/>
</dbReference>
<dbReference type="InterPro" id="IPR015911">
    <property type="entry name" value="Phosphoglycerate_kinase_CS"/>
</dbReference>
<dbReference type="InterPro" id="IPR015824">
    <property type="entry name" value="Phosphoglycerate_kinase_N"/>
</dbReference>
<dbReference type="InterPro" id="IPR036043">
    <property type="entry name" value="Phosphoglycerate_kinase_sf"/>
</dbReference>
<dbReference type="PANTHER" id="PTHR11406">
    <property type="entry name" value="PHOSPHOGLYCERATE KINASE"/>
    <property type="match status" value="1"/>
</dbReference>
<dbReference type="PANTHER" id="PTHR11406:SF23">
    <property type="entry name" value="PHOSPHOGLYCERATE KINASE 1, CHLOROPLASTIC-RELATED"/>
    <property type="match status" value="1"/>
</dbReference>
<dbReference type="Pfam" id="PF00162">
    <property type="entry name" value="PGK"/>
    <property type="match status" value="1"/>
</dbReference>
<dbReference type="PIRSF" id="PIRSF000724">
    <property type="entry name" value="Pgk"/>
    <property type="match status" value="1"/>
</dbReference>
<dbReference type="PRINTS" id="PR00477">
    <property type="entry name" value="PHGLYCKINASE"/>
</dbReference>
<dbReference type="SUPFAM" id="SSF53748">
    <property type="entry name" value="Phosphoglycerate kinase"/>
    <property type="match status" value="1"/>
</dbReference>
<dbReference type="PROSITE" id="PS00111">
    <property type="entry name" value="PGLYCERATE_KINASE"/>
    <property type="match status" value="1"/>
</dbReference>
<reference key="1">
    <citation type="journal article" date="2010" name="Genome Biol.">
        <title>Structure and dynamics of the pan-genome of Streptococcus pneumoniae and closely related species.</title>
        <authorList>
            <person name="Donati C."/>
            <person name="Hiller N.L."/>
            <person name="Tettelin H."/>
            <person name="Muzzi A."/>
            <person name="Croucher N.J."/>
            <person name="Angiuoli S.V."/>
            <person name="Oggioni M."/>
            <person name="Dunning Hotopp J.C."/>
            <person name="Hu F.Z."/>
            <person name="Riley D.R."/>
            <person name="Covacci A."/>
            <person name="Mitchell T.J."/>
            <person name="Bentley S.D."/>
            <person name="Kilian M."/>
            <person name="Ehrlich G.D."/>
            <person name="Rappuoli R."/>
            <person name="Moxon E.R."/>
            <person name="Masignani V."/>
        </authorList>
    </citation>
    <scope>NUCLEOTIDE SEQUENCE [LARGE SCALE GENOMIC DNA]</scope>
    <source>
        <strain>Taiwan19F-14</strain>
    </source>
</reference>
<protein>
    <recommendedName>
        <fullName evidence="1">Phosphoglycerate kinase</fullName>
        <ecNumber evidence="1">2.7.2.3</ecNumber>
    </recommendedName>
</protein>